<gene>
    <name type="primary">Rgs14</name>
</gene>
<sequence length="547" mass="59847">MPGKPKHLGVPNGRMVLAVSDGELTSTAGSQAQGEGRGSSLSIHSLPSGPSSPFSTEEQPVASWAQSFERLLQDPRGLAYFTEFLKKEFSAENVTFWKACERFQQIPASDTKQLAQEAHNIYHEFLSSQALSPVNIDRQAWLSEEVLAQPRPDMFRAQQLQIFNLMKFDSYARFVKSPLYQECLLAEAEGRPLREPGSSHLGSPDTARKKPKLKPGKSLPLGVEELGQLPLAEGPCGRPLRKSFRREMTGGAMNSALRRESQGSLNSSASLDLGFLAFVSSKSESHRKSLGSGESESESRPGKYCCVYLPDGTASLALARPGLTIRDMLAGICEKRGLSLPDIKVYLVGNEQKALVLDQDCTVLADQEVRLENRITFQLELVGLERVVRISAKPTKRLQEALQPILAKHGLSLDQVVLHRPGEKQPMDLENPVSSVASQTLVLDTPPDAKMSEARSISPCRSQGCLPRTQTKDSHLPPSSSSLLVEDASSSTGNRQTCDIEGLVELLNRVQSSGAHDQRGLLRKEDLVLPEFLQLPSQRPGSREAPP</sequence>
<feature type="chain" id="PRO_0000204218" description="Regulator of G-protein signaling 14">
    <location>
        <begin position="1"/>
        <end position="547"/>
    </location>
</feature>
<feature type="domain" description="RGS" evidence="5">
    <location>
        <begin position="67"/>
        <end position="184"/>
    </location>
</feature>
<feature type="domain" description="RBD 1" evidence="6">
    <location>
        <begin position="303"/>
        <end position="374"/>
    </location>
</feature>
<feature type="domain" description="RBD 2" evidence="6">
    <location>
        <begin position="376"/>
        <end position="446"/>
    </location>
</feature>
<feature type="domain" description="GoLoco" evidence="4">
    <location>
        <begin position="500"/>
        <end position="522"/>
    </location>
</feature>
<feature type="region of interest" description="Disordered" evidence="7">
    <location>
        <begin position="19"/>
        <end position="59"/>
    </location>
</feature>
<feature type="region of interest" description="Disordered" evidence="7">
    <location>
        <begin position="191"/>
        <end position="220"/>
    </location>
</feature>
<feature type="region of interest" description="Necessary for interaction with RABGEF1" evidence="9">
    <location>
        <begin position="300"/>
        <end position="427"/>
    </location>
</feature>
<feature type="region of interest" description="Disordered" evidence="7">
    <location>
        <begin position="447"/>
        <end position="496"/>
    </location>
</feature>
<feature type="compositionally biased region" description="Polar residues" evidence="7">
    <location>
        <begin position="23"/>
        <end position="58"/>
    </location>
</feature>
<feature type="compositionally biased region" description="Low complexity" evidence="7">
    <location>
        <begin position="476"/>
        <end position="491"/>
    </location>
</feature>
<feature type="modified residue" description="Phosphoserine" evidence="3">
    <location>
        <position position="20"/>
    </location>
</feature>
<feature type="modified residue" description="Phosphoserine" evidence="3">
    <location>
        <position position="42"/>
    </location>
</feature>
<feature type="modified residue" description="Phosphoserine" evidence="3">
    <location>
        <position position="45"/>
    </location>
</feature>
<feature type="modified residue" description="Phosphoserine" evidence="2">
    <location>
        <position position="143"/>
    </location>
</feature>
<feature type="modified residue" description="Phosphoserine" evidence="18">
    <location>
        <position position="199"/>
    </location>
</feature>
<feature type="modified residue" description="Phosphoserine" evidence="2">
    <location>
        <position position="203"/>
    </location>
</feature>
<feature type="modified residue" description="Phosphoserine" evidence="2">
    <location>
        <position position="218"/>
    </location>
</feature>
<feature type="modified residue" description="Phosphothreonine" evidence="18">
    <location>
        <position position="249"/>
    </location>
</feature>
<feature type="modified residue" description="Phosphoserine" evidence="2">
    <location>
        <position position="289"/>
    </location>
</feature>
<feature type="mutagenesis site" description="Inhibits GAP activity. Does not inhibit interaction with GNAI1 in the centrosomes. Reduces the down-regulation of G(i)-dependent signaling. Does not affect subcellular location and does not promote gene transcription activation. Inhibits strongly the down-regulation of G(i)-dependent signaling; when associated with F-519. Inhibits the interaction with GNAI1 in the centrosomes; when associated with A-518." evidence="9 10 14">
    <original>EN</original>
    <variation>AA</variation>
    <location>
        <begin position="92"/>
        <end position="93"/>
    </location>
</feature>
<feature type="mutagenesis site" description="Does not affect subcellular location; when associated with A-497." evidence="10">
    <original>S</original>
    <variation>A</variation>
    <location>
        <position position="261"/>
    </location>
</feature>
<feature type="mutagenesis site" description="Reduces interaction with RABGEF1 and RAP2A. Strongly reduces interaction with RAP2A; when associated with L-409." evidence="9 10 13">
    <original>R</original>
    <variation>L</variation>
    <location>
        <position position="336"/>
    </location>
</feature>
<feature type="mutagenesis site" description="Does not reduce interaction with RAP2A. Strongly reduces interaction with RAP2A; when associated with L-336." evidence="10 13">
    <original>H</original>
    <variation>L</variation>
    <location>
        <position position="409"/>
    </location>
</feature>
<feature type="mutagenesis site" description="Does not affect subcellular location; when associated with A-261." evidence="10">
    <original>T</original>
    <variation>A</variation>
    <location>
        <position position="497"/>
    </location>
</feature>
<feature type="mutagenesis site" description="Strongly expressed in the nucleus, mainly associated with PML nuclear bodies but not with centrosomes. Promotes gene transcription activation." evidence="10">
    <original>LL</original>
    <variation>AA</variation>
    <location>
        <begin position="506"/>
        <end position="507"/>
    </location>
</feature>
<feature type="mutagenesis site" description="Inhibits GDI activity. Does not inhibit interaction with GNAI1 in the centrosomes, does not affect subcellular location and does not promote gene transcription activation. Inhibits interaction with GNAI1 in the centrosomes; when associated with A-92-93-A." evidence="10 14">
    <original>Q</original>
    <variation>A</variation>
    <location>
        <position position="518"/>
    </location>
</feature>
<feature type="mutagenesis site" description="Reduces interaction with GNAI1 and GNAI2. Inhibits strongly the down-regulation of G(i)-dependent signaling; when associated with A-92-93-A." evidence="9">
    <original>R</original>
    <variation>F</variation>
    <location>
        <position position="519"/>
    </location>
</feature>
<feature type="sequence conflict" description="In Ref. 4; BAB22436." evidence="17" ref="4">
    <location>
        <position position="209"/>
    </location>
</feature>
<feature type="sequence conflict" description="In Ref. 1; AAB41893." evidence="17" ref="1">
    <original>N</original>
    <variation>T</variation>
    <location>
        <position position="431"/>
    </location>
</feature>
<feature type="strand" evidence="19">
    <location>
        <begin position="375"/>
        <end position="392"/>
    </location>
</feature>
<feature type="strand" evidence="19">
    <location>
        <begin position="394"/>
        <end position="397"/>
    </location>
</feature>
<feature type="turn" evidence="19">
    <location>
        <begin position="398"/>
        <end position="402"/>
    </location>
</feature>
<feature type="helix" evidence="19">
    <location>
        <begin position="403"/>
        <end position="406"/>
    </location>
</feature>
<feature type="turn" evidence="19">
    <location>
        <begin position="407"/>
        <end position="410"/>
    </location>
</feature>
<feature type="turn" evidence="19">
    <location>
        <begin position="413"/>
        <end position="415"/>
    </location>
</feature>
<feature type="helix" evidence="19">
    <location>
        <begin position="433"/>
        <end position="435"/>
    </location>
</feature>
<feature type="strand" evidence="19">
    <location>
        <begin position="436"/>
        <end position="439"/>
    </location>
</feature>
<feature type="strand" evidence="19">
    <location>
        <begin position="441"/>
        <end position="443"/>
    </location>
</feature>
<feature type="strand" evidence="19">
    <location>
        <begin position="451"/>
        <end position="454"/>
    </location>
</feature>
<comment type="function">
    <text evidence="8 9 11 12 13 15">Regulates G protein-coupled receptor signaling cascades. Inhibits signal transduction by increasing the GTPase activity of G protein alpha subunits, thereby driving them into their inactive GDP-bound form. Besides, modulates signal transduction via G protein alpha subunits by functioning as a GDP-dissociation inhibitor (GDI). Has GDI activity on G(i) alpha subunits GNAI1 and GNAI3, but not on GNAI2 and G(o)-alpha subunit GNAO1. Has GAP activity on GNAI0, GNAI2 and GNAI3. May act as a scaffold integrating G protein and Ras/Raf MAPkinase signaling pathways. Inhibits platelet-derived growth factor (PDGF)-stimulated ERK1/ERK2 phosphorylation; a process depending on its interaction with HRAS and that is reversed by G(i) alpha subunit GNAI1. Acts as a positive modulator of microtubule polymerisation and spindle organization through a G(i)-alpha-dependent mechanism. Plays a role in cell division; required for completion of the first mitotic division of the embryo. Involved in visual memory processing capacity; when overexpressed in the V2 secondary visual cortex area. Involved in hippocampal-based learning and memory; acts as a suppressor of synaptic plasticity in CA2 neurons. Required for the nerve growth factor (NGF)-mediated neurite outgrowth. Involved in stress resistance.</text>
</comment>
<comment type="subunit">
    <text evidence="2 8 9 14">Interacts with GNAI1 and GNAI2 (PubMed:15112653, PubMed:17635935). Interacts with GNAI3 (By similarity). Interacts with GNAO1 (PubMed:10926822). Interacts (via RGS and GoLoco domains) with GNAI1; the interaction occurs in the centrosomes. Interaction with GNAI1 or GNAI3 (via active GTP- or inactive GDP-bound forms) prevents association of RGS14 with centrosomes or nuclear localization (By similarity). Interacts with RABGEF1; the interactions is GTP-dependent (PubMed:10926822, PubMed:15112653). Interacts with RAP2A; the interactions is GTP-dependent and does not alter its function on G(i) alpha subunits either as GAP or as GDI (PubMed:10926822, PubMed:15112653). Associates with microtubules (By similarity). Found in a complex with at least BRAF, HRAS, MAP2K1, MAPK3 and RGS14. Interacts with RIC8A (via C-terminus). Interacts (via RBD 1 domain) with HRAS (active GTP-bound form preferentially). Interacts (via RBD domains) with BRAF (via N-terminus); the interaction mediates the formation of a ternary complex with RAF1. Interacts (via RBD domains) with RAF1 (via N-terminus); the interaction mediates the formation of a ternary complex with BRAF. Interacts with KRAS (active GTP-bound form preferentially), MRAS (active GTP-bound form preferentially), NRAS (active GTP-bound form preferentially) and RRAS (active GTP-bound form preferentially) (By similarity).</text>
</comment>
<comment type="subcellular location">
    <subcellularLocation>
        <location>Nucleus</location>
    </subcellularLocation>
    <subcellularLocation>
        <location>Nucleus</location>
        <location>PML body</location>
    </subcellularLocation>
    <subcellularLocation>
        <location>Cytoplasm</location>
    </subcellularLocation>
    <subcellularLocation>
        <location>Membrane</location>
    </subcellularLocation>
    <subcellularLocation>
        <location evidence="1">Cell membrane</location>
    </subcellularLocation>
    <subcellularLocation>
        <location>Cytoplasm</location>
        <location>Cytoskeleton</location>
        <location>Spindle</location>
    </subcellularLocation>
    <subcellularLocation>
        <location evidence="1">Cytoplasm</location>
        <location evidence="1">Cytoskeleton</location>
        <location evidence="1">Spindle pole</location>
    </subcellularLocation>
    <subcellularLocation>
        <location>Cytoplasm</location>
        <location>Cytoskeleton</location>
        <location>Microtubule organizing center</location>
        <location>Centrosome</location>
    </subcellularLocation>
    <subcellularLocation>
        <location>Cell projection</location>
        <location>Dendrite</location>
    </subcellularLocation>
    <subcellularLocation>
        <location>Cell projection</location>
        <location>Dendritic spine</location>
    </subcellularLocation>
    <subcellularLocation>
        <location>Postsynaptic density</location>
    </subcellularLocation>
    <text evidence="1">Localizes with spindle poles during metaphase. Shuttles between the nucleus and cytoplasm in a CRM1-dependent manner. Recruited from the cytosol to the plasma membrane by the inactive GDP-bound forms of G(i) alpha subunits GNAI1 and GNAI3. Recruited from the cytosol to membranes by the active GTP-bound form of HRAS. Colocalizes with G(i) alpha subunit GNAI1 and RIC8A at the plasma membrane. Colocalizes with BRAF and RAF1 in both the cytoplasm and membranes (By similarity). Associates with the perinuclear sheaths of microtubules (MTs) surrounding the pronuclei, prior to segregating to the anastral mitotic apparatus and subsequently the barrel- shaped cytoplasmic bridge between the nascent nuclei of the emerging 2-cell embryo. Localizes to a perinuclear compartment near the microtubule-organizing center (MTOC). Expressed in the nucleus during interphase and segregates to the centrosomes and astral MTs during mitosis. Shuttles between the nucleus and cytoplasm in a CRM1-dependent manner. Relocalizes to the nucleus in PML nuclear bodies in respons to heat stress. Colocalizes with RIC8A in CA2 hippocampal neurons.</text>
</comment>
<comment type="tissue specificity">
    <text evidence="8 11 15 16">Expressed in pyramidal neurons of the CA1, CA2 and fasciola cinerea (FC) subregions of the hippocampus and in the olfactory cortex (at protein level). Expressed in brain, spleen, heart, liver, lung, kidney, skin and thymus (at protein level). Expressed in granular layer of the cerebellum, forbrain, striatum, layer V of the cortex, olfactory cortex, tubercules, subthalamic and hippocampus, particularly in the CA2 region, to a lesser extent in the CA1 region and the external layer of the dentate gyrus. Expressed in neurons.</text>
</comment>
<comment type="developmental stage">
    <text evidence="8 11">Expressed in germinal vesicle oocytes, not in metaphase II oocytes. Expressed in embryo from 8.5 through 16.5 dpc (at protein level). Expressed in the zygote through to the blastocyst stage. Expressed in area lateral to the rhombencephalic floor plate at 12 dpc. Expressed in the anterior region of the brain, including the telencephalic olfactive nuclei and the hippocampus anlage at 17 dpc.</text>
</comment>
<comment type="domain">
    <text evidence="1">The RGS domain is necessary for GTPase-activating protein (GAP) activity for G subunits and localization to the nucleus and centrosomes.</text>
</comment>
<comment type="domain">
    <text evidence="1">The GoLoco domain is necessary for GDP-dissociation inhibitor (GDI) activity, translocation out of the nucleus and interaction with G(i) alpha subunits GNAI1, GNAI2 and GNAI3.</text>
</comment>
<comment type="domain">
    <text evidence="1">The RBD domains are necessary for localization to the nucleus and centrosomes.</text>
</comment>
<comment type="PTM">
    <text evidence="1">Phosphorylated by PKC. Phosphorylation is increased in presence of forskolin and may enhance the GDI activity on G(i) alpha subunit GNAI1 (By similarity).</text>
</comment>
<comment type="disruption phenotype">
    <text evidence="11 15">No visible phenotype. Mice show an enhancement of postsynaptic long-term potentiation (LTP) responses in the CA2 neurons of the hippocampus that is correlated with an increase of spatial learning and object recognition memory (OMR).</text>
</comment>
<comment type="online information" name="Protein Spotlight">
    <link uri="https://www.proteinspotlight.org/back_issues/132"/>
    <text>A balanced mind - Issue 132 of October 2011</text>
</comment>
<reference key="1">
    <citation type="submission" date="1997-01" db="EMBL/GenBank/DDBJ databases">
        <authorList>
            <person name="Janoueix-Lerosey I."/>
            <person name="Tavitian A."/>
            <person name="de Gunzburg J."/>
        </authorList>
    </citation>
    <scope>NUCLEOTIDE SEQUENCE [MRNA]</scope>
    <source>
        <strain>BALB/cJ</strain>
    </source>
</reference>
<reference key="2">
    <citation type="journal article" date="2009" name="PLoS Biol.">
        <title>Lineage-specific biology revealed by a finished genome assembly of the mouse.</title>
        <authorList>
            <person name="Church D.M."/>
            <person name="Goodstadt L."/>
            <person name="Hillier L.W."/>
            <person name="Zody M.C."/>
            <person name="Goldstein S."/>
            <person name="She X."/>
            <person name="Bult C.J."/>
            <person name="Agarwala R."/>
            <person name="Cherry J.L."/>
            <person name="DiCuccio M."/>
            <person name="Hlavina W."/>
            <person name="Kapustin Y."/>
            <person name="Meric P."/>
            <person name="Maglott D."/>
            <person name="Birtle Z."/>
            <person name="Marques A.C."/>
            <person name="Graves T."/>
            <person name="Zhou S."/>
            <person name="Teague B."/>
            <person name="Potamousis K."/>
            <person name="Churas C."/>
            <person name="Place M."/>
            <person name="Herschleb J."/>
            <person name="Runnheim R."/>
            <person name="Forrest D."/>
            <person name="Amos-Landgraf J."/>
            <person name="Schwartz D.C."/>
            <person name="Cheng Z."/>
            <person name="Lindblad-Toh K."/>
            <person name="Eichler E.E."/>
            <person name="Ponting C.P."/>
        </authorList>
    </citation>
    <scope>NUCLEOTIDE SEQUENCE [LARGE SCALE GENOMIC DNA]</scope>
    <source>
        <strain>C57BL/6J</strain>
    </source>
</reference>
<reference key="3">
    <citation type="journal article" date="2004" name="Genome Res.">
        <title>The status, quality, and expansion of the NIH full-length cDNA project: the Mammalian Gene Collection (MGC).</title>
        <authorList>
            <consortium name="The MGC Project Team"/>
        </authorList>
    </citation>
    <scope>NUCLEOTIDE SEQUENCE [LARGE SCALE MRNA]</scope>
    <source>
        <strain>FVB/N-3</strain>
        <tissue>Mammary tumor</tissue>
    </source>
</reference>
<reference key="4">
    <citation type="journal article" date="2005" name="Science">
        <title>The transcriptional landscape of the mammalian genome.</title>
        <authorList>
            <person name="Carninci P."/>
            <person name="Kasukawa T."/>
            <person name="Katayama S."/>
            <person name="Gough J."/>
            <person name="Frith M.C."/>
            <person name="Maeda N."/>
            <person name="Oyama R."/>
            <person name="Ravasi T."/>
            <person name="Lenhard B."/>
            <person name="Wells C."/>
            <person name="Kodzius R."/>
            <person name="Shimokawa K."/>
            <person name="Bajic V.B."/>
            <person name="Brenner S.E."/>
            <person name="Batalov S."/>
            <person name="Forrest A.R."/>
            <person name="Zavolan M."/>
            <person name="Davis M.J."/>
            <person name="Wilming L.G."/>
            <person name="Aidinis V."/>
            <person name="Allen J.E."/>
            <person name="Ambesi-Impiombato A."/>
            <person name="Apweiler R."/>
            <person name="Aturaliya R.N."/>
            <person name="Bailey T.L."/>
            <person name="Bansal M."/>
            <person name="Baxter L."/>
            <person name="Beisel K.W."/>
            <person name="Bersano T."/>
            <person name="Bono H."/>
            <person name="Chalk A.M."/>
            <person name="Chiu K.P."/>
            <person name="Choudhary V."/>
            <person name="Christoffels A."/>
            <person name="Clutterbuck D.R."/>
            <person name="Crowe M.L."/>
            <person name="Dalla E."/>
            <person name="Dalrymple B.P."/>
            <person name="de Bono B."/>
            <person name="Della Gatta G."/>
            <person name="di Bernardo D."/>
            <person name="Down T."/>
            <person name="Engstrom P."/>
            <person name="Fagiolini M."/>
            <person name="Faulkner G."/>
            <person name="Fletcher C.F."/>
            <person name="Fukushima T."/>
            <person name="Furuno M."/>
            <person name="Futaki S."/>
            <person name="Gariboldi M."/>
            <person name="Georgii-Hemming P."/>
            <person name="Gingeras T.R."/>
            <person name="Gojobori T."/>
            <person name="Green R.E."/>
            <person name="Gustincich S."/>
            <person name="Harbers M."/>
            <person name="Hayashi Y."/>
            <person name="Hensch T.K."/>
            <person name="Hirokawa N."/>
            <person name="Hill D."/>
            <person name="Huminiecki L."/>
            <person name="Iacono M."/>
            <person name="Ikeo K."/>
            <person name="Iwama A."/>
            <person name="Ishikawa T."/>
            <person name="Jakt M."/>
            <person name="Kanapin A."/>
            <person name="Katoh M."/>
            <person name="Kawasawa Y."/>
            <person name="Kelso J."/>
            <person name="Kitamura H."/>
            <person name="Kitano H."/>
            <person name="Kollias G."/>
            <person name="Krishnan S.P."/>
            <person name="Kruger A."/>
            <person name="Kummerfeld S.K."/>
            <person name="Kurochkin I.V."/>
            <person name="Lareau L.F."/>
            <person name="Lazarevic D."/>
            <person name="Lipovich L."/>
            <person name="Liu J."/>
            <person name="Liuni S."/>
            <person name="McWilliam S."/>
            <person name="Madan Babu M."/>
            <person name="Madera M."/>
            <person name="Marchionni L."/>
            <person name="Matsuda H."/>
            <person name="Matsuzawa S."/>
            <person name="Miki H."/>
            <person name="Mignone F."/>
            <person name="Miyake S."/>
            <person name="Morris K."/>
            <person name="Mottagui-Tabar S."/>
            <person name="Mulder N."/>
            <person name="Nakano N."/>
            <person name="Nakauchi H."/>
            <person name="Ng P."/>
            <person name="Nilsson R."/>
            <person name="Nishiguchi S."/>
            <person name="Nishikawa S."/>
            <person name="Nori F."/>
            <person name="Ohara O."/>
            <person name="Okazaki Y."/>
            <person name="Orlando V."/>
            <person name="Pang K.C."/>
            <person name="Pavan W.J."/>
            <person name="Pavesi G."/>
            <person name="Pesole G."/>
            <person name="Petrovsky N."/>
            <person name="Piazza S."/>
            <person name="Reed J."/>
            <person name="Reid J.F."/>
            <person name="Ring B.Z."/>
            <person name="Ringwald M."/>
            <person name="Rost B."/>
            <person name="Ruan Y."/>
            <person name="Salzberg S.L."/>
            <person name="Sandelin A."/>
            <person name="Schneider C."/>
            <person name="Schoenbach C."/>
            <person name="Sekiguchi K."/>
            <person name="Semple C.A."/>
            <person name="Seno S."/>
            <person name="Sessa L."/>
            <person name="Sheng Y."/>
            <person name="Shibata Y."/>
            <person name="Shimada H."/>
            <person name="Shimada K."/>
            <person name="Silva D."/>
            <person name="Sinclair B."/>
            <person name="Sperling S."/>
            <person name="Stupka E."/>
            <person name="Sugiura K."/>
            <person name="Sultana R."/>
            <person name="Takenaka Y."/>
            <person name="Taki K."/>
            <person name="Tammoja K."/>
            <person name="Tan S.L."/>
            <person name="Tang S."/>
            <person name="Taylor M.S."/>
            <person name="Tegner J."/>
            <person name="Teichmann S.A."/>
            <person name="Ueda H.R."/>
            <person name="van Nimwegen E."/>
            <person name="Verardo R."/>
            <person name="Wei C.L."/>
            <person name="Yagi K."/>
            <person name="Yamanishi H."/>
            <person name="Zabarovsky E."/>
            <person name="Zhu S."/>
            <person name="Zimmer A."/>
            <person name="Hide W."/>
            <person name="Bult C."/>
            <person name="Grimmond S.M."/>
            <person name="Teasdale R.D."/>
            <person name="Liu E.T."/>
            <person name="Brusic V."/>
            <person name="Quackenbush J."/>
            <person name="Wahlestedt C."/>
            <person name="Mattick J.S."/>
            <person name="Hume D.A."/>
            <person name="Kai C."/>
            <person name="Sasaki D."/>
            <person name="Tomaru Y."/>
            <person name="Fukuda S."/>
            <person name="Kanamori-Katayama M."/>
            <person name="Suzuki M."/>
            <person name="Aoki J."/>
            <person name="Arakawa T."/>
            <person name="Iida J."/>
            <person name="Imamura K."/>
            <person name="Itoh M."/>
            <person name="Kato T."/>
            <person name="Kawaji H."/>
            <person name="Kawagashira N."/>
            <person name="Kawashima T."/>
            <person name="Kojima M."/>
            <person name="Kondo S."/>
            <person name="Konno H."/>
            <person name="Nakano K."/>
            <person name="Ninomiya N."/>
            <person name="Nishio T."/>
            <person name="Okada M."/>
            <person name="Plessy C."/>
            <person name="Shibata K."/>
            <person name="Shiraki T."/>
            <person name="Suzuki S."/>
            <person name="Tagami M."/>
            <person name="Waki K."/>
            <person name="Watahiki A."/>
            <person name="Okamura-Oho Y."/>
            <person name="Suzuki H."/>
            <person name="Kawai J."/>
            <person name="Hayashizaki Y."/>
        </authorList>
    </citation>
    <scope>NUCLEOTIDE SEQUENCE [LARGE SCALE MRNA] OF 166-547</scope>
    <source>
        <strain>C57BL/6J</strain>
        <tissue>Kidney</tissue>
    </source>
</reference>
<reference key="5">
    <citation type="journal article" date="2000" name="Biochem. J.">
        <title>RGS14 is a novel Rap effector that preferentially regulates the GTPase activity of galphao.</title>
        <authorList>
            <person name="Traver S."/>
            <person name="Bidot C."/>
            <person name="Spassky N."/>
            <person name="Baltauss T."/>
            <person name="De Tand M.F."/>
            <person name="Thomas J.L."/>
            <person name="Zalc B."/>
            <person name="Janoueix-Lerosey I."/>
            <person name="Gunzburg J.D."/>
        </authorList>
    </citation>
    <scope>FUNCTION</scope>
    <scope>INTERACTION WITH GNAO1</scope>
    <scope>RABGEF1 AND RAP2A</scope>
    <scope>SUBCELLULAR LOCATION</scope>
    <scope>DEVELOPMENTAL STAGE</scope>
    <scope>TISSUE SPECIFICITY</scope>
</reference>
<reference key="6">
    <citation type="journal article" date="2004" name="Biochem. J.">
        <title>The RGS (regulator of G-protein signalling) and GoLoco domains of RGS14 co-operate to regulate Gi-mediated signalling.</title>
        <authorList>
            <person name="Traver S."/>
            <person name="Splingard A."/>
            <person name="Gaudriault G."/>
            <person name="De Gunzburg J."/>
        </authorList>
    </citation>
    <scope>FUNCTION</scope>
    <scope>INTERACTION WITH GNAI1; GNAI2; RABGEF1 AND RAP2A</scope>
    <scope>MUTAGENESIS OF 92-GLU-ASN-93; ARG-336 AND ARG-519</scope>
</reference>
<reference key="7">
    <citation type="journal article" date="2004" name="Dev. Cell">
        <title>RGS14 is a mitotic spindle protein essential from the first division of the mammalian zygote.</title>
        <authorList>
            <person name="Martin-McCaffrey L."/>
            <person name="Willard F.S."/>
            <person name="Oliveira-dos-Santos A.J."/>
            <person name="Natale D.R."/>
            <person name="Snow B.E."/>
            <person name="Kimple R.J."/>
            <person name="Pajak A."/>
            <person name="Watson A.J."/>
            <person name="Dagnino L."/>
            <person name="Penninger J.M."/>
            <person name="Siderovski D.P."/>
            <person name="D'Souza S.J."/>
        </authorList>
    </citation>
    <scope>FUNCTION</scope>
    <scope>DISRUPTION PHENOTYPE</scope>
    <scope>DEVELOPMENTAL STAGE</scope>
    <scope>TISSUE SPECIFICITY</scope>
</reference>
<reference key="8">
    <citation type="journal article" date="2005" name="Cell Cycle">
        <title>RGS14 is a microtubule-associated protein.</title>
        <authorList>
            <person name="Martin-McCaffrey L."/>
            <person name="Willard F.S."/>
            <person name="Pajak A."/>
            <person name="Dagnino L."/>
            <person name="Siderovski D.P."/>
            <person name="D'Souza S.J."/>
        </authorList>
    </citation>
    <scope>FUNCTION</scope>
    <scope>SUBCELLULAR LOCATION</scope>
</reference>
<reference key="9">
    <citation type="journal article" date="2005" name="J. Biol. Chem.">
        <title>RGS14 is a centrosomal and nuclear cytoplasmic shuttling protein that traffics to promyelocytic leukemia nuclear bodies following heat shock.</title>
        <authorList>
            <person name="Cho H."/>
            <person name="Kim D.U."/>
            <person name="Kehrl J.H."/>
        </authorList>
    </citation>
    <scope>SUBCELLULAR LOCATION</scope>
    <scope>MUTAGENESIS OF 92-GLU-ASN-93; SER-261; ARG-336; HIS-409; THR-497; 506-LEU-LEU-507 AND GLN-518</scope>
</reference>
<reference key="10">
    <citation type="journal article" date="2006" name="Biochem. J.">
        <title>Biochemical characterization of RGS14: RGS14 activity towards G-protein alpha subunits is independent of its binding to Rap2A.</title>
        <authorList>
            <person name="Mittal V."/>
            <person name="Linder M.E."/>
        </authorList>
    </citation>
    <scope>FUNCTION</scope>
    <scope>MUTAGENESIS OF ARG-336 AND HIS-409</scope>
</reference>
<reference key="11">
    <citation type="journal article" date="2007" name="J. Cell Biol.">
        <title>Localization of Gi alpha proteins in the centrosomes and at the midbody: implication for their role in cell division.</title>
        <authorList>
            <person name="Cho H."/>
            <person name="Kehrl J.H."/>
        </authorList>
    </citation>
    <scope>INTERACTION WITH GNAI1</scope>
    <scope>MUTAGENESIS OF 92-GLU-ASN-93 AND GLN-518</scope>
</reference>
<reference key="12">
    <citation type="journal article" date="2010" name="Cell">
        <title>A tissue-specific atlas of mouse protein phosphorylation and expression.</title>
        <authorList>
            <person name="Huttlin E.L."/>
            <person name="Jedrychowski M.P."/>
            <person name="Elias J.E."/>
            <person name="Goswami T."/>
            <person name="Rad R."/>
            <person name="Beausoleil S.A."/>
            <person name="Villen J."/>
            <person name="Haas W."/>
            <person name="Sowa M.E."/>
            <person name="Gygi S.P."/>
        </authorList>
    </citation>
    <scope>PHOSPHORYLATION [LARGE SCALE ANALYSIS] AT SER-199 AND THR-249</scope>
    <scope>IDENTIFICATION BY MASS SPECTROMETRY [LARGE SCALE ANALYSIS]</scope>
    <source>
        <tissue>Brain</tissue>
        <tissue>Lung</tissue>
        <tissue>Spleen</tissue>
    </source>
</reference>
<reference key="13">
    <citation type="journal article" date="2010" name="Proc. Natl. Acad. Sci. U.S.A.">
        <title>RGS14 is a natural suppressor of both synaptic plasticity in CA2 neurons and hippocampal-based learning and memory.</title>
        <authorList>
            <person name="Lee S.E."/>
            <person name="Simons S.B."/>
            <person name="Heldt S.A."/>
            <person name="Zhao M."/>
            <person name="Schroeder J.P."/>
            <person name="Vellano C.P."/>
            <person name="Cowan D.P."/>
            <person name="Ramineni S."/>
            <person name="Yates C.K."/>
            <person name="Feng Y."/>
            <person name="Smith Y."/>
            <person name="Sweatt J.D."/>
            <person name="Weinshenker D."/>
            <person name="Ressler K.J."/>
            <person name="Dudek S.M."/>
            <person name="Hepler J.R."/>
        </authorList>
    </citation>
    <scope>FUNCTION</scope>
    <scope>DISRUPTION PHENOTYPE</scope>
    <scope>SUBCELLULAR LOCATION</scope>
    <scope>TISSUE SPECIFICITY</scope>
</reference>
<reference key="14">
    <citation type="journal article" date="2011" name="Biochemistry">
        <title>Activation of the regulator of G protein signaling 14-Galphai1-GDP signaling complex is regulated by resistance to inhibitors of cholinesterase-8A.</title>
        <authorList>
            <person name="Vellano C.P."/>
            <person name="Shu F.J."/>
            <person name="Ramineni S."/>
            <person name="Yates C.K."/>
            <person name="Tall G.G."/>
            <person name="Hepler J.R."/>
        </authorList>
    </citation>
    <scope>SUBCELLULAR LOCATION</scope>
    <scope>TISSUE SPECIFICITY</scope>
</reference>
<reference key="15">
    <citation type="submission" date="2004-11" db="PDB data bank">
        <title>Solution structure of the RAS-binding domain of mouse RGS14.</title>
        <authorList>
            <consortium name="RIKEN structural genomics initiative (RSGI)"/>
        </authorList>
    </citation>
    <scope>STRUCTURE BY NMR OF 366-456</scope>
</reference>
<organism>
    <name type="scientific">Mus musculus</name>
    <name type="common">Mouse</name>
    <dbReference type="NCBI Taxonomy" id="10090"/>
    <lineage>
        <taxon>Eukaryota</taxon>
        <taxon>Metazoa</taxon>
        <taxon>Chordata</taxon>
        <taxon>Craniata</taxon>
        <taxon>Vertebrata</taxon>
        <taxon>Euteleostomi</taxon>
        <taxon>Mammalia</taxon>
        <taxon>Eutheria</taxon>
        <taxon>Euarchontoglires</taxon>
        <taxon>Glires</taxon>
        <taxon>Rodentia</taxon>
        <taxon>Myomorpha</taxon>
        <taxon>Muroidea</taxon>
        <taxon>Muridae</taxon>
        <taxon>Murinae</taxon>
        <taxon>Mus</taxon>
        <taxon>Mus</taxon>
    </lineage>
</organism>
<protein>
    <recommendedName>
        <fullName>Regulator of G-protein signaling 14</fullName>
        <shortName>RGS14</shortName>
    </recommendedName>
    <alternativeName>
        <fullName>RAP1/RAP2-interacting protein</fullName>
        <shortName>RPIP1</shortName>
    </alternativeName>
</protein>
<dbReference type="EMBL" id="U85055">
    <property type="protein sequence ID" value="AAB41893.1"/>
    <property type="molecule type" value="mRNA"/>
</dbReference>
<dbReference type="EMBL" id="CT009762">
    <property type="status" value="NOT_ANNOTATED_CDS"/>
    <property type="molecule type" value="Genomic_DNA"/>
</dbReference>
<dbReference type="EMBL" id="BC030321">
    <property type="protein sequence ID" value="AAH30321.1"/>
    <property type="molecule type" value="mRNA"/>
</dbReference>
<dbReference type="EMBL" id="AK002891">
    <property type="protein sequence ID" value="BAB22436.1"/>
    <property type="molecule type" value="mRNA"/>
</dbReference>
<dbReference type="CCDS" id="CCDS36674.1"/>
<dbReference type="RefSeq" id="NP_058038.2">
    <property type="nucleotide sequence ID" value="NM_016758.3"/>
</dbReference>
<dbReference type="PDB" id="1WFY">
    <property type="method" value="NMR"/>
    <property type="chains" value="A=366-456"/>
</dbReference>
<dbReference type="PDBsum" id="1WFY"/>
<dbReference type="SMR" id="P97492"/>
<dbReference type="BioGRID" id="206175">
    <property type="interactions" value="230"/>
</dbReference>
<dbReference type="FunCoup" id="P97492">
    <property type="interactions" value="500"/>
</dbReference>
<dbReference type="IntAct" id="P97492">
    <property type="interactions" value="2"/>
</dbReference>
<dbReference type="MINT" id="P97492"/>
<dbReference type="STRING" id="10090.ENSMUSP00000068731"/>
<dbReference type="iPTMnet" id="P97492"/>
<dbReference type="PhosphoSitePlus" id="P97492"/>
<dbReference type="jPOST" id="P97492"/>
<dbReference type="PaxDb" id="10090-ENSMUSP00000068731"/>
<dbReference type="PeptideAtlas" id="P97492"/>
<dbReference type="ProteomicsDB" id="255192"/>
<dbReference type="ABCD" id="P97492">
    <property type="antibodies" value="2 sequenced antibodies"/>
</dbReference>
<dbReference type="Antibodypedia" id="29266">
    <property type="antibodies" value="329 antibodies from 39 providers"/>
</dbReference>
<dbReference type="DNASU" id="51791"/>
<dbReference type="Ensembl" id="ENSMUST00000063771.14">
    <property type="protein sequence ID" value="ENSMUSP00000068731.8"/>
    <property type="gene ID" value="ENSMUSG00000052087.15"/>
</dbReference>
<dbReference type="GeneID" id="51791"/>
<dbReference type="KEGG" id="mmu:51791"/>
<dbReference type="UCSC" id="uc007qqq.2">
    <property type="organism name" value="mouse"/>
</dbReference>
<dbReference type="AGR" id="MGI:1859709"/>
<dbReference type="CTD" id="10636"/>
<dbReference type="MGI" id="MGI:1859709">
    <property type="gene designation" value="Rgs14"/>
</dbReference>
<dbReference type="VEuPathDB" id="HostDB:ENSMUSG00000052087"/>
<dbReference type="eggNOG" id="KOG3589">
    <property type="taxonomic scope" value="Eukaryota"/>
</dbReference>
<dbReference type="GeneTree" id="ENSGT00940000161364"/>
<dbReference type="HOGENOM" id="CLU_024780_1_1_1"/>
<dbReference type="InParanoid" id="P97492"/>
<dbReference type="OMA" id="PWAEGHR"/>
<dbReference type="OrthoDB" id="196547at2759"/>
<dbReference type="PhylomeDB" id="P97492"/>
<dbReference type="TreeFam" id="TF328814"/>
<dbReference type="Reactome" id="R-MMU-418594">
    <property type="pathway name" value="G alpha (i) signalling events"/>
</dbReference>
<dbReference type="BioGRID-ORCS" id="51791">
    <property type="hits" value="4 hits in 78 CRISPR screens"/>
</dbReference>
<dbReference type="ChiTaRS" id="Rgs14">
    <property type="organism name" value="mouse"/>
</dbReference>
<dbReference type="EvolutionaryTrace" id="P97492"/>
<dbReference type="PRO" id="PR:P97492"/>
<dbReference type="Proteomes" id="UP000000589">
    <property type="component" value="Chromosome 13"/>
</dbReference>
<dbReference type="RNAct" id="P97492">
    <property type="molecule type" value="protein"/>
</dbReference>
<dbReference type="Bgee" id="ENSMUSG00000052087">
    <property type="expression patterns" value="Expressed in granulocyte and 159 other cell types or tissues"/>
</dbReference>
<dbReference type="ExpressionAtlas" id="P97492">
    <property type="expression patterns" value="baseline and differential"/>
</dbReference>
<dbReference type="GO" id="GO:0005813">
    <property type="term" value="C:centrosome"/>
    <property type="evidence" value="ECO:0000314"/>
    <property type="project" value="UniProtKB"/>
</dbReference>
<dbReference type="GO" id="GO:0005737">
    <property type="term" value="C:cytoplasm"/>
    <property type="evidence" value="ECO:0000314"/>
    <property type="project" value="UniProtKB"/>
</dbReference>
<dbReference type="GO" id="GO:0030425">
    <property type="term" value="C:dendrite"/>
    <property type="evidence" value="ECO:0000314"/>
    <property type="project" value="UniProtKB"/>
</dbReference>
<dbReference type="GO" id="GO:0043197">
    <property type="term" value="C:dendritic spine"/>
    <property type="evidence" value="ECO:0000314"/>
    <property type="project" value="UniProtKB"/>
</dbReference>
<dbReference type="GO" id="GO:0098978">
    <property type="term" value="C:glutamatergic synapse"/>
    <property type="evidence" value="ECO:0000314"/>
    <property type="project" value="SynGO"/>
</dbReference>
<dbReference type="GO" id="GO:0005874">
    <property type="term" value="C:microtubule"/>
    <property type="evidence" value="ECO:0007669"/>
    <property type="project" value="UniProtKB-KW"/>
</dbReference>
<dbReference type="GO" id="GO:0016604">
    <property type="term" value="C:nuclear body"/>
    <property type="evidence" value="ECO:0000314"/>
    <property type="project" value="UniProtKB"/>
</dbReference>
<dbReference type="GO" id="GO:0005634">
    <property type="term" value="C:nucleus"/>
    <property type="evidence" value="ECO:0000314"/>
    <property type="project" value="UniProtKB"/>
</dbReference>
<dbReference type="GO" id="GO:0005886">
    <property type="term" value="C:plasma membrane"/>
    <property type="evidence" value="ECO:0000314"/>
    <property type="project" value="UniProtKB"/>
</dbReference>
<dbReference type="GO" id="GO:0016605">
    <property type="term" value="C:PML body"/>
    <property type="evidence" value="ECO:0007669"/>
    <property type="project" value="UniProtKB-SubCell"/>
</dbReference>
<dbReference type="GO" id="GO:0014069">
    <property type="term" value="C:postsynaptic density"/>
    <property type="evidence" value="ECO:0000314"/>
    <property type="project" value="UniProtKB"/>
</dbReference>
<dbReference type="GO" id="GO:0005819">
    <property type="term" value="C:spindle"/>
    <property type="evidence" value="ECO:0000314"/>
    <property type="project" value="UniProtKB"/>
</dbReference>
<dbReference type="GO" id="GO:0000922">
    <property type="term" value="C:spindle pole"/>
    <property type="evidence" value="ECO:0000250"/>
    <property type="project" value="UniProtKB"/>
</dbReference>
<dbReference type="GO" id="GO:0001965">
    <property type="term" value="F:G-protein alpha-subunit binding"/>
    <property type="evidence" value="ECO:0007669"/>
    <property type="project" value="Ensembl"/>
</dbReference>
<dbReference type="GO" id="GO:0005092">
    <property type="term" value="F:GDP-dissociation inhibitor activity"/>
    <property type="evidence" value="ECO:0000250"/>
    <property type="project" value="UniProtKB"/>
</dbReference>
<dbReference type="GO" id="GO:0032794">
    <property type="term" value="F:GTPase activating protein binding"/>
    <property type="evidence" value="ECO:0000353"/>
    <property type="project" value="UniProtKB"/>
</dbReference>
<dbReference type="GO" id="GO:0005096">
    <property type="term" value="F:GTPase activator activity"/>
    <property type="evidence" value="ECO:0000314"/>
    <property type="project" value="UniProtKB"/>
</dbReference>
<dbReference type="GO" id="GO:0008017">
    <property type="term" value="F:microtubule binding"/>
    <property type="evidence" value="ECO:0000250"/>
    <property type="project" value="UniProtKB"/>
</dbReference>
<dbReference type="GO" id="GO:0019901">
    <property type="term" value="F:protein kinase binding"/>
    <property type="evidence" value="ECO:0007669"/>
    <property type="project" value="Ensembl"/>
</dbReference>
<dbReference type="GO" id="GO:0030159">
    <property type="term" value="F:signaling receptor complex adaptor activity"/>
    <property type="evidence" value="ECO:0000250"/>
    <property type="project" value="UniProtKB"/>
</dbReference>
<dbReference type="GO" id="GO:0051301">
    <property type="term" value="P:cell division"/>
    <property type="evidence" value="ECO:0000250"/>
    <property type="project" value="UniProtKB"/>
</dbReference>
<dbReference type="GO" id="GO:0007059">
    <property type="term" value="P:chromosome segregation"/>
    <property type="evidence" value="ECO:0000315"/>
    <property type="project" value="UniProtKB"/>
</dbReference>
<dbReference type="GO" id="GO:0007186">
    <property type="term" value="P:G protein-coupled receptor signaling pathway"/>
    <property type="evidence" value="ECO:0000304"/>
    <property type="project" value="MGI"/>
</dbReference>
<dbReference type="GO" id="GO:0007612">
    <property type="term" value="P:learning"/>
    <property type="evidence" value="ECO:0000315"/>
    <property type="project" value="UniProtKB"/>
</dbReference>
<dbReference type="GO" id="GO:0007616">
    <property type="term" value="P:long-term memory"/>
    <property type="evidence" value="ECO:0000315"/>
    <property type="project" value="UniProtKB"/>
</dbReference>
<dbReference type="GO" id="GO:0060291">
    <property type="term" value="P:long-term synaptic potentiation"/>
    <property type="evidence" value="ECO:0000314"/>
    <property type="project" value="UniProtKB"/>
</dbReference>
<dbReference type="GO" id="GO:0000278">
    <property type="term" value="P:mitotic cell cycle"/>
    <property type="evidence" value="ECO:0000315"/>
    <property type="project" value="MGI"/>
</dbReference>
<dbReference type="GO" id="GO:0050804">
    <property type="term" value="P:modulation of chemical synaptic transmission"/>
    <property type="evidence" value="ECO:0000314"/>
    <property type="project" value="SynGO"/>
</dbReference>
<dbReference type="GO" id="GO:0070373">
    <property type="term" value="P:negative regulation of ERK1 and ERK2 cascade"/>
    <property type="evidence" value="ECO:0000250"/>
    <property type="project" value="UniProtKB"/>
</dbReference>
<dbReference type="GO" id="GO:0045744">
    <property type="term" value="P:negative regulation of G protein-coupled receptor signaling pathway"/>
    <property type="evidence" value="ECO:0000314"/>
    <property type="project" value="UniProtKB"/>
</dbReference>
<dbReference type="GO" id="GO:0043407">
    <property type="term" value="P:negative regulation of MAP kinase activity"/>
    <property type="evidence" value="ECO:0000315"/>
    <property type="project" value="UniProtKB"/>
</dbReference>
<dbReference type="GO" id="GO:0031914">
    <property type="term" value="P:negative regulation of synaptic plasticity"/>
    <property type="evidence" value="ECO:0000315"/>
    <property type="project" value="UniProtKB"/>
</dbReference>
<dbReference type="GO" id="GO:0006913">
    <property type="term" value="P:nucleocytoplasmic transport"/>
    <property type="evidence" value="ECO:0000314"/>
    <property type="project" value="UniProtKB"/>
</dbReference>
<dbReference type="GO" id="GO:0048008">
    <property type="term" value="P:platelet-derived growth factor receptor signaling pathway"/>
    <property type="evidence" value="ECO:0000250"/>
    <property type="project" value="UniProtKB"/>
</dbReference>
<dbReference type="GO" id="GO:0043547">
    <property type="term" value="P:positive regulation of GTPase activity"/>
    <property type="evidence" value="ECO:0000314"/>
    <property type="project" value="UniProtKB"/>
</dbReference>
<dbReference type="GO" id="GO:0050769">
    <property type="term" value="P:positive regulation of neurogenesis"/>
    <property type="evidence" value="ECO:0000250"/>
    <property type="project" value="UniProtKB"/>
</dbReference>
<dbReference type="GO" id="GO:0006979">
    <property type="term" value="P:response to oxidative stress"/>
    <property type="evidence" value="ECO:0000250"/>
    <property type="project" value="UniProtKB"/>
</dbReference>
<dbReference type="GO" id="GO:0007051">
    <property type="term" value="P:spindle organization"/>
    <property type="evidence" value="ECO:0000315"/>
    <property type="project" value="UniProtKB"/>
</dbReference>
<dbReference type="GO" id="GO:0008542">
    <property type="term" value="P:visual learning"/>
    <property type="evidence" value="ECO:0000250"/>
    <property type="project" value="UniProtKB"/>
</dbReference>
<dbReference type="GO" id="GO:0010070">
    <property type="term" value="P:zygote asymmetric cell division"/>
    <property type="evidence" value="ECO:0000315"/>
    <property type="project" value="UniProtKB"/>
</dbReference>
<dbReference type="CDD" id="cd17137">
    <property type="entry name" value="RBD1_RGS14"/>
    <property type="match status" value="1"/>
</dbReference>
<dbReference type="CDD" id="cd17139">
    <property type="entry name" value="RBD2_RGS14"/>
    <property type="match status" value="1"/>
</dbReference>
<dbReference type="CDD" id="cd08743">
    <property type="entry name" value="RGS_RGS14"/>
    <property type="match status" value="1"/>
</dbReference>
<dbReference type="FunFam" id="1.10.167.10:FF:000001">
    <property type="entry name" value="Putative regulator of g-protein signaling 12"/>
    <property type="match status" value="1"/>
</dbReference>
<dbReference type="FunFam" id="3.10.20.90:FF:000145">
    <property type="entry name" value="regulator of G-protein signaling 14 isoform X1"/>
    <property type="match status" value="1"/>
</dbReference>
<dbReference type="Gene3D" id="1.10.196.10">
    <property type="match status" value="1"/>
</dbReference>
<dbReference type="Gene3D" id="3.10.20.90">
    <property type="entry name" value="Phosphatidylinositol 3-kinase Catalytic Subunit, Chain A, domain 1"/>
    <property type="match status" value="2"/>
</dbReference>
<dbReference type="Gene3D" id="1.10.167.10">
    <property type="entry name" value="Regulator of G-protein Signalling 4, domain 2"/>
    <property type="match status" value="1"/>
</dbReference>
<dbReference type="InterPro" id="IPR003109">
    <property type="entry name" value="GoLoco_motif"/>
</dbReference>
<dbReference type="InterPro" id="IPR046992">
    <property type="entry name" value="RBD1_RGS14"/>
</dbReference>
<dbReference type="InterPro" id="IPR046993">
    <property type="entry name" value="RBD2_RGS14"/>
</dbReference>
<dbReference type="InterPro" id="IPR003116">
    <property type="entry name" value="RBD_dom"/>
</dbReference>
<dbReference type="InterPro" id="IPR016137">
    <property type="entry name" value="RGS"/>
</dbReference>
<dbReference type="InterPro" id="IPR046995">
    <property type="entry name" value="RGS10/12/14-like"/>
</dbReference>
<dbReference type="InterPro" id="IPR037881">
    <property type="entry name" value="RGS14_RGS"/>
</dbReference>
<dbReference type="InterPro" id="IPR036305">
    <property type="entry name" value="RGS_sf"/>
</dbReference>
<dbReference type="InterPro" id="IPR024066">
    <property type="entry name" value="RGS_subdom1/3"/>
</dbReference>
<dbReference type="InterPro" id="IPR044926">
    <property type="entry name" value="RGS_subdomain_2"/>
</dbReference>
<dbReference type="InterPro" id="IPR029071">
    <property type="entry name" value="Ubiquitin-like_domsf"/>
</dbReference>
<dbReference type="PANTHER" id="PTHR45945:SF2">
    <property type="entry name" value="REGULATOR OF G-PROTEIN SIGNALING 14"/>
    <property type="match status" value="1"/>
</dbReference>
<dbReference type="PANTHER" id="PTHR45945">
    <property type="entry name" value="REGULATOR OF G-PROTEIN SIGNALING LOCO"/>
    <property type="match status" value="1"/>
</dbReference>
<dbReference type="Pfam" id="PF02188">
    <property type="entry name" value="GoLoco"/>
    <property type="match status" value="1"/>
</dbReference>
<dbReference type="Pfam" id="PF02196">
    <property type="entry name" value="RBD"/>
    <property type="match status" value="1"/>
</dbReference>
<dbReference type="Pfam" id="PF00615">
    <property type="entry name" value="RGS"/>
    <property type="match status" value="1"/>
</dbReference>
<dbReference type="PRINTS" id="PR01301">
    <property type="entry name" value="RGSPROTEIN"/>
</dbReference>
<dbReference type="SMART" id="SM00390">
    <property type="entry name" value="GoLoco"/>
    <property type="match status" value="1"/>
</dbReference>
<dbReference type="SMART" id="SM00455">
    <property type="entry name" value="RBD"/>
    <property type="match status" value="2"/>
</dbReference>
<dbReference type="SMART" id="SM00315">
    <property type="entry name" value="RGS"/>
    <property type="match status" value="1"/>
</dbReference>
<dbReference type="SUPFAM" id="SSF48097">
    <property type="entry name" value="Regulator of G-protein signaling, RGS"/>
    <property type="match status" value="1"/>
</dbReference>
<dbReference type="SUPFAM" id="SSF54236">
    <property type="entry name" value="Ubiquitin-like"/>
    <property type="match status" value="2"/>
</dbReference>
<dbReference type="PROSITE" id="PS50877">
    <property type="entry name" value="GOLOCO"/>
    <property type="match status" value="1"/>
</dbReference>
<dbReference type="PROSITE" id="PS50898">
    <property type="entry name" value="RBD"/>
    <property type="match status" value="2"/>
</dbReference>
<dbReference type="PROSITE" id="PS50132">
    <property type="entry name" value="RGS"/>
    <property type="match status" value="1"/>
</dbReference>
<keyword id="KW-0002">3D-structure</keyword>
<keyword id="KW-0131">Cell cycle</keyword>
<keyword id="KW-0132">Cell division</keyword>
<keyword id="KW-1003">Cell membrane</keyword>
<keyword id="KW-0966">Cell projection</keyword>
<keyword id="KW-0963">Cytoplasm</keyword>
<keyword id="KW-0206">Cytoskeleton</keyword>
<keyword id="KW-0217">Developmental protein</keyword>
<keyword id="KW-0343">GTPase activation</keyword>
<keyword id="KW-0472">Membrane</keyword>
<keyword id="KW-0493">Microtubule</keyword>
<keyword id="KW-0539">Nucleus</keyword>
<keyword id="KW-0597">Phosphoprotein</keyword>
<keyword id="KW-1185">Reference proteome</keyword>
<keyword id="KW-0677">Repeat</keyword>
<keyword id="KW-0734">Signal transduction inhibitor</keyword>
<keyword id="KW-0770">Synapse</keyword>
<name>RGS14_MOUSE</name>
<accession>P97492</accession>
<accession>Q8K2R4</accession>
<accession>Q9DCD1</accession>
<proteinExistence type="evidence at protein level"/>
<evidence type="ECO:0000250" key="1"/>
<evidence type="ECO:0000250" key="2">
    <source>
        <dbReference type="UniProtKB" id="O08773"/>
    </source>
</evidence>
<evidence type="ECO:0000250" key="3">
    <source>
        <dbReference type="UniProtKB" id="O43566"/>
    </source>
</evidence>
<evidence type="ECO:0000255" key="4">
    <source>
        <dbReference type="PROSITE-ProRule" id="PRU00097"/>
    </source>
</evidence>
<evidence type="ECO:0000255" key="5">
    <source>
        <dbReference type="PROSITE-ProRule" id="PRU00171"/>
    </source>
</evidence>
<evidence type="ECO:0000255" key="6">
    <source>
        <dbReference type="PROSITE-ProRule" id="PRU00262"/>
    </source>
</evidence>
<evidence type="ECO:0000256" key="7">
    <source>
        <dbReference type="SAM" id="MobiDB-lite"/>
    </source>
</evidence>
<evidence type="ECO:0000269" key="8">
    <source>
    </source>
</evidence>
<evidence type="ECO:0000269" key="9">
    <source>
    </source>
</evidence>
<evidence type="ECO:0000269" key="10">
    <source>
    </source>
</evidence>
<evidence type="ECO:0000269" key="11">
    <source>
    </source>
</evidence>
<evidence type="ECO:0000269" key="12">
    <source>
    </source>
</evidence>
<evidence type="ECO:0000269" key="13">
    <source>
    </source>
</evidence>
<evidence type="ECO:0000269" key="14">
    <source>
    </source>
</evidence>
<evidence type="ECO:0000269" key="15">
    <source>
    </source>
</evidence>
<evidence type="ECO:0000269" key="16">
    <source>
    </source>
</evidence>
<evidence type="ECO:0000305" key="17"/>
<evidence type="ECO:0007744" key="18">
    <source>
    </source>
</evidence>
<evidence type="ECO:0007829" key="19">
    <source>
        <dbReference type="PDB" id="1WFY"/>
    </source>
</evidence>